<dbReference type="EMBL" id="AE001439">
    <property type="protein sequence ID" value="AAD05615.1"/>
    <property type="molecule type" value="Genomic_DNA"/>
</dbReference>
<dbReference type="PIR" id="E71983">
    <property type="entry name" value="E71983"/>
</dbReference>
<dbReference type="RefSeq" id="WP_000347931.1">
    <property type="nucleotide sequence ID" value="NZ_CP011330.1"/>
</dbReference>
<dbReference type="SMR" id="Q9ZN29"/>
<dbReference type="KEGG" id="hpj:jhp_0031"/>
<dbReference type="PATRIC" id="fig|85963.30.peg.1009"/>
<dbReference type="eggNOG" id="COG0718">
    <property type="taxonomic scope" value="Bacteria"/>
</dbReference>
<dbReference type="Proteomes" id="UP000000804">
    <property type="component" value="Chromosome"/>
</dbReference>
<dbReference type="GO" id="GO:0043590">
    <property type="term" value="C:bacterial nucleoid"/>
    <property type="evidence" value="ECO:0007669"/>
    <property type="project" value="UniProtKB-UniRule"/>
</dbReference>
<dbReference type="GO" id="GO:0005737">
    <property type="term" value="C:cytoplasm"/>
    <property type="evidence" value="ECO:0007669"/>
    <property type="project" value="UniProtKB-UniRule"/>
</dbReference>
<dbReference type="GO" id="GO:0003677">
    <property type="term" value="F:DNA binding"/>
    <property type="evidence" value="ECO:0007669"/>
    <property type="project" value="UniProtKB-UniRule"/>
</dbReference>
<dbReference type="Gene3D" id="3.30.1310.10">
    <property type="entry name" value="Nucleoid-associated protein YbaB-like domain"/>
    <property type="match status" value="1"/>
</dbReference>
<dbReference type="HAMAP" id="MF_00274">
    <property type="entry name" value="DNA_YbaB_EbfC"/>
    <property type="match status" value="1"/>
</dbReference>
<dbReference type="InterPro" id="IPR036894">
    <property type="entry name" value="YbaB-like_sf"/>
</dbReference>
<dbReference type="InterPro" id="IPR004401">
    <property type="entry name" value="YbaB/EbfC"/>
</dbReference>
<dbReference type="NCBIfam" id="TIGR00103">
    <property type="entry name" value="DNA_YbaB_EbfC"/>
    <property type="match status" value="1"/>
</dbReference>
<dbReference type="Pfam" id="PF02575">
    <property type="entry name" value="YbaB_DNA_bd"/>
    <property type="match status" value="1"/>
</dbReference>
<dbReference type="SUPFAM" id="SSF82607">
    <property type="entry name" value="YbaB-like"/>
    <property type="match status" value="1"/>
</dbReference>
<comment type="function">
    <text evidence="1">Binds to DNA and alters its conformation. May be involved in regulation of gene expression, nucleoid organization and DNA protection.</text>
</comment>
<comment type="subunit">
    <text evidence="1">Homodimer.</text>
</comment>
<comment type="subcellular location">
    <subcellularLocation>
        <location evidence="1">Cytoplasm</location>
        <location evidence="1">Nucleoid</location>
    </subcellularLocation>
</comment>
<comment type="similarity">
    <text evidence="1">Belongs to the YbaB/EbfC family.</text>
</comment>
<protein>
    <recommendedName>
        <fullName evidence="1">Nucleoid-associated protein jhp_0031</fullName>
    </recommendedName>
</protein>
<organism>
    <name type="scientific">Helicobacter pylori (strain J99 / ATCC 700824)</name>
    <name type="common">Campylobacter pylori J99</name>
    <dbReference type="NCBI Taxonomy" id="85963"/>
    <lineage>
        <taxon>Bacteria</taxon>
        <taxon>Pseudomonadati</taxon>
        <taxon>Campylobacterota</taxon>
        <taxon>Epsilonproteobacteria</taxon>
        <taxon>Campylobacterales</taxon>
        <taxon>Helicobacteraceae</taxon>
        <taxon>Helicobacter</taxon>
    </lineage>
</organism>
<accession>Q9ZN29</accession>
<evidence type="ECO:0000255" key="1">
    <source>
        <dbReference type="HAMAP-Rule" id="MF_00274"/>
    </source>
</evidence>
<sequence length="100" mass="10949">MDFSQLGGLSGLLDGVKKEFSQLEEKNKDTIHTSKSGGGMVSVSFNGLGELVDLQIDDSLLEDKEAMQIYLMSALNDGYKAVEENRKNLAFNMLGNFAKL</sequence>
<feature type="chain" id="PRO_0000170400" description="Nucleoid-associated protein jhp_0031">
    <location>
        <begin position="1"/>
        <end position="100"/>
    </location>
</feature>
<keyword id="KW-0963">Cytoplasm</keyword>
<keyword id="KW-0238">DNA-binding</keyword>
<gene>
    <name type="ordered locus">jhp_0031</name>
</gene>
<proteinExistence type="inferred from homology"/>
<reference key="1">
    <citation type="journal article" date="1999" name="Nature">
        <title>Genomic sequence comparison of two unrelated isolates of the human gastric pathogen Helicobacter pylori.</title>
        <authorList>
            <person name="Alm R.A."/>
            <person name="Ling L.-S.L."/>
            <person name="Moir D.T."/>
            <person name="King B.L."/>
            <person name="Brown E.D."/>
            <person name="Doig P.C."/>
            <person name="Smith D.R."/>
            <person name="Noonan B."/>
            <person name="Guild B.C."/>
            <person name="deJonge B.L."/>
            <person name="Carmel G."/>
            <person name="Tummino P.J."/>
            <person name="Caruso A."/>
            <person name="Uria-Nickelsen M."/>
            <person name="Mills D.M."/>
            <person name="Ives C."/>
            <person name="Gibson R."/>
            <person name="Merberg D."/>
            <person name="Mills S.D."/>
            <person name="Jiang Q."/>
            <person name="Taylor D.E."/>
            <person name="Vovis G.F."/>
            <person name="Trust T.J."/>
        </authorList>
    </citation>
    <scope>NUCLEOTIDE SEQUENCE [LARGE SCALE GENOMIC DNA]</scope>
    <source>
        <strain>J99 / ATCC 700824</strain>
    </source>
</reference>
<name>Y031_HELPJ</name>